<comment type="function">
    <text evidence="1">Transcription factor that plays a role in the activation of archaeal genes transcribed by RNA polymerase. Facilitates transcription initiation by enhancing TATA-box recognition by TATA-box-binding protein (Tbp), and transcription factor B (Tfb) and RNA polymerase recruitment. Not absolutely required for transcription in vitro, but particularly important in cases where Tbp or Tfb function is not optimal. It dynamically alters the nucleic acid-binding properties of RNA polymerases by stabilizing the initiation complex and destabilizing elongation complexes. Seems to translocate with the RNA polymerase following initiation and acts by binding to the non template strand of the transcription bubble in elongation complexes.</text>
</comment>
<comment type="subunit">
    <text evidence="1">Monomer. Interaction with RNA polymerase subunits RpoF and RpoE is necessary for Tfe stimulatory transcription activity. Able to interact with Tbp and RNA polymerase in the absence of DNA promoter. Interacts both with the preinitiation and elongation complexes.</text>
</comment>
<comment type="domain">
    <text evidence="1">The winged helix domain is involved in binding to DNA in the preinitiation complex.</text>
</comment>
<comment type="similarity">
    <text evidence="1">Belongs to the TFE family.</text>
</comment>
<proteinExistence type="inferred from homology"/>
<accession>B1YA16</accession>
<evidence type="ECO:0000255" key="1">
    <source>
        <dbReference type="HAMAP-Rule" id="MF_01909"/>
    </source>
</evidence>
<name>TFE_PYRNV</name>
<keyword id="KW-0238">DNA-binding</keyword>
<keyword id="KW-0804">Transcription</keyword>
<keyword id="KW-0805">Transcription regulation</keyword>
<reference key="1">
    <citation type="submission" date="2008-03" db="EMBL/GenBank/DDBJ databases">
        <title>Complete sequence of Thermoproteus neutrophilus V24Sta.</title>
        <authorList>
            <consortium name="US DOE Joint Genome Institute"/>
            <person name="Copeland A."/>
            <person name="Lucas S."/>
            <person name="Lapidus A."/>
            <person name="Glavina del Rio T."/>
            <person name="Dalin E."/>
            <person name="Tice H."/>
            <person name="Bruce D."/>
            <person name="Goodwin L."/>
            <person name="Pitluck S."/>
            <person name="Sims D."/>
            <person name="Brettin T."/>
            <person name="Detter J.C."/>
            <person name="Han C."/>
            <person name="Kuske C.R."/>
            <person name="Schmutz J."/>
            <person name="Larimer F."/>
            <person name="Land M."/>
            <person name="Hauser L."/>
            <person name="Kyrpides N."/>
            <person name="Mikhailova N."/>
            <person name="Biddle J.F."/>
            <person name="Zhang Z."/>
            <person name="Fitz-Gibbon S.T."/>
            <person name="Lowe T.M."/>
            <person name="Saltikov C."/>
            <person name="House C.H."/>
            <person name="Richardson P."/>
        </authorList>
    </citation>
    <scope>NUCLEOTIDE SEQUENCE [LARGE SCALE GENOMIC DNA]</scope>
    <source>
        <strain>DSM 2338 / JCM 9278 / NBRC 100436 / V24Sta</strain>
    </source>
</reference>
<gene>
    <name evidence="1" type="primary">tfe</name>
    <name type="ordered locus">Tneu_0032</name>
</gene>
<organism>
    <name type="scientific">Pyrobaculum neutrophilum (strain DSM 2338 / JCM 9278 / NBRC 100436 / V24Sta)</name>
    <name type="common">Thermoproteus neutrophilus</name>
    <dbReference type="NCBI Taxonomy" id="444157"/>
    <lineage>
        <taxon>Archaea</taxon>
        <taxon>Thermoproteota</taxon>
        <taxon>Thermoprotei</taxon>
        <taxon>Thermoproteales</taxon>
        <taxon>Thermoproteaceae</taxon>
        <taxon>Pyrobaculum</taxon>
    </lineage>
</organism>
<feature type="chain" id="PRO_1000188787" description="Transcription factor E">
    <location>
        <begin position="1"/>
        <end position="170"/>
    </location>
</feature>
<feature type="domain" description="HTH TFE/IIEalpha-type" evidence="1">
    <location>
        <begin position="1"/>
        <end position="93"/>
    </location>
</feature>
<sequence length="170" mass="19771">MKEAYLYIVEKSVAWEFDSPEYGRLARKVVELLYDRKEDLTDDRVAILLNISTAETRRILQYLMKLGLVGVKKRTTEDYRIEYTWYVDDDVIRQAIKNRAKVAKEKISSLIKSLTEGAYYVCPTCHMRYTLDQAVNYGGVCPVCGTQLEYVENVEEIDKLTKAYESIDKI</sequence>
<protein>
    <recommendedName>
        <fullName evidence="1">Transcription factor E</fullName>
        <shortName evidence="1">TFE</shortName>
    </recommendedName>
    <alternativeName>
        <fullName evidence="1">TFIIE subunit alpha homolog</fullName>
    </alternativeName>
    <alternativeName>
        <fullName evidence="1">Transcription initiation factor TFIIE</fullName>
    </alternativeName>
</protein>
<dbReference type="EMBL" id="CP001014">
    <property type="protein sequence ID" value="ACB38990.1"/>
    <property type="molecule type" value="Genomic_DNA"/>
</dbReference>
<dbReference type="RefSeq" id="WP_012349412.1">
    <property type="nucleotide sequence ID" value="NC_010525.1"/>
</dbReference>
<dbReference type="SMR" id="B1YA16"/>
<dbReference type="STRING" id="444157.Tneu_0032"/>
<dbReference type="GeneID" id="6164403"/>
<dbReference type="KEGG" id="tne:Tneu_0032"/>
<dbReference type="eggNOG" id="arCOG04270">
    <property type="taxonomic scope" value="Archaea"/>
</dbReference>
<dbReference type="HOGENOM" id="CLU_100097_1_0_2"/>
<dbReference type="OrthoDB" id="5935at2157"/>
<dbReference type="Proteomes" id="UP000001694">
    <property type="component" value="Chromosome"/>
</dbReference>
<dbReference type="GO" id="GO:0003677">
    <property type="term" value="F:DNA binding"/>
    <property type="evidence" value="ECO:0007669"/>
    <property type="project" value="UniProtKB-KW"/>
</dbReference>
<dbReference type="GO" id="GO:0006355">
    <property type="term" value="P:regulation of DNA-templated transcription"/>
    <property type="evidence" value="ECO:0007669"/>
    <property type="project" value="InterPro"/>
</dbReference>
<dbReference type="GO" id="GO:0006367">
    <property type="term" value="P:transcription initiation at RNA polymerase II promoter"/>
    <property type="evidence" value="ECO:0007669"/>
    <property type="project" value="InterPro"/>
</dbReference>
<dbReference type="Gene3D" id="1.10.10.10">
    <property type="entry name" value="Winged helix-like DNA-binding domain superfamily/Winged helix DNA-binding domain"/>
    <property type="match status" value="1"/>
</dbReference>
<dbReference type="HAMAP" id="MF_01909">
    <property type="entry name" value="TFE_arch"/>
    <property type="match status" value="1"/>
</dbReference>
<dbReference type="InterPro" id="IPR016481">
    <property type="entry name" value="TF_E_archaea"/>
</dbReference>
<dbReference type="InterPro" id="IPR017919">
    <property type="entry name" value="TFIIE/TFIIEa_HTH"/>
</dbReference>
<dbReference type="InterPro" id="IPR002853">
    <property type="entry name" value="TFIIE_asu"/>
</dbReference>
<dbReference type="InterPro" id="IPR024550">
    <property type="entry name" value="TFIIEa/SarR/Rpc3_HTH_dom"/>
</dbReference>
<dbReference type="InterPro" id="IPR036388">
    <property type="entry name" value="WH-like_DNA-bd_sf"/>
</dbReference>
<dbReference type="InterPro" id="IPR036390">
    <property type="entry name" value="WH_DNA-bd_sf"/>
</dbReference>
<dbReference type="Pfam" id="PF02002">
    <property type="entry name" value="TFIIE_alpha"/>
    <property type="match status" value="1"/>
</dbReference>
<dbReference type="PIRSF" id="PIRSF006373">
    <property type="entry name" value="TF_E_archaea"/>
    <property type="match status" value="1"/>
</dbReference>
<dbReference type="SMART" id="SM00531">
    <property type="entry name" value="TFIIE"/>
    <property type="match status" value="1"/>
</dbReference>
<dbReference type="SUPFAM" id="SSF46785">
    <property type="entry name" value="Winged helix' DNA-binding domain"/>
    <property type="match status" value="1"/>
</dbReference>
<dbReference type="PROSITE" id="PS51344">
    <property type="entry name" value="HTH_TFE_IIE"/>
    <property type="match status" value="1"/>
</dbReference>